<evidence type="ECO:0000250" key="1"/>
<evidence type="ECO:0000255" key="2"/>
<evidence type="ECO:0000256" key="3">
    <source>
        <dbReference type="SAM" id="MobiDB-lite"/>
    </source>
</evidence>
<evidence type="ECO:0000305" key="4"/>
<dbReference type="EMBL" id="AAFW02000145">
    <property type="protein sequence ID" value="EDN60400.1"/>
    <property type="molecule type" value="Genomic_DNA"/>
</dbReference>
<dbReference type="SMR" id="A6ZY20"/>
<dbReference type="GlyCosmos" id="A6ZY20">
    <property type="glycosylation" value="15 sites, No reported glycans"/>
</dbReference>
<dbReference type="HOGENOM" id="CLU_035846_0_0_1"/>
<dbReference type="Proteomes" id="UP000007060">
    <property type="component" value="Unassembled WGS sequence"/>
</dbReference>
<dbReference type="GO" id="GO:0009986">
    <property type="term" value="C:cell surface"/>
    <property type="evidence" value="ECO:0007669"/>
    <property type="project" value="TreeGrafter"/>
</dbReference>
<dbReference type="GO" id="GO:0005576">
    <property type="term" value="C:extracellular region"/>
    <property type="evidence" value="ECO:0007669"/>
    <property type="project" value="UniProtKB-KW"/>
</dbReference>
<dbReference type="GO" id="GO:0009277">
    <property type="term" value="C:fungal-type cell wall"/>
    <property type="evidence" value="ECO:0007669"/>
    <property type="project" value="TreeGrafter"/>
</dbReference>
<dbReference type="GO" id="GO:0005886">
    <property type="term" value="C:plasma membrane"/>
    <property type="evidence" value="ECO:0007669"/>
    <property type="project" value="UniProtKB-SubCell"/>
</dbReference>
<dbReference type="GO" id="GO:0098552">
    <property type="term" value="C:side of membrane"/>
    <property type="evidence" value="ECO:0007669"/>
    <property type="project" value="UniProtKB-KW"/>
</dbReference>
<dbReference type="GO" id="GO:0031505">
    <property type="term" value="P:fungal-type cell wall organization"/>
    <property type="evidence" value="ECO:0007669"/>
    <property type="project" value="TreeGrafter"/>
</dbReference>
<dbReference type="FunFam" id="3.80.20.20:FF:000016">
    <property type="entry name" value="Cell wall protein ECM33"/>
    <property type="match status" value="1"/>
</dbReference>
<dbReference type="Gene3D" id="3.80.20.20">
    <property type="entry name" value="Receptor L-domain"/>
    <property type="match status" value="2"/>
</dbReference>
<dbReference type="InterPro" id="IPR051648">
    <property type="entry name" value="CWI-Assembly_Regulator"/>
</dbReference>
<dbReference type="InterPro" id="IPR036941">
    <property type="entry name" value="Rcpt_L-dom_sf"/>
</dbReference>
<dbReference type="PANTHER" id="PTHR31018:SF3">
    <property type="entry name" value="RECEPTOR PROTEIN-TYROSINE KINASE"/>
    <property type="match status" value="1"/>
</dbReference>
<dbReference type="PANTHER" id="PTHR31018">
    <property type="entry name" value="SPORULATION-SPECIFIC PROTEIN-RELATED"/>
    <property type="match status" value="1"/>
</dbReference>
<dbReference type="SUPFAM" id="SSF52058">
    <property type="entry name" value="L domain-like"/>
    <property type="match status" value="3"/>
</dbReference>
<comment type="function">
    <text evidence="1">Has a partially redundant function to ECM33 in cell wall integrity. May be involved in a repair mechanism activated in response to cell wall damage (By similarity).</text>
</comment>
<comment type="subcellular location">
    <subcellularLocation>
        <location evidence="1">Cell membrane</location>
        <topology evidence="1">Lipid-anchor</topology>
        <topology evidence="1">GPI-anchor</topology>
    </subcellularLocation>
    <subcellularLocation>
        <location evidence="1">Secreted</location>
        <location evidence="1">Cell wall</location>
    </subcellularLocation>
    <text evidence="1">Identified as GPI-anchored plasma membrane protein (GPI-PMP) as well as non-covalently-linked, soluble protein of the cell wall. Secreted by regenerating protoplasts. In budded cells, concentrates at the surface of the buds (By similarity).</text>
</comment>
<comment type="induction">
    <text evidence="1">Positively regulated by cell integrity signaling through MPK1 in response to cell wall perturbation. Induction is dependent on transcription factor RLM1 (By similarity).</text>
</comment>
<comment type="PTM">
    <text evidence="1">Extensively N- and O-mannosylated.</text>
</comment>
<comment type="similarity">
    <text evidence="4">Belongs to the SPS2 family.</text>
</comment>
<protein>
    <recommendedName>
        <fullName>Cell wall mannoprotein PST1</fullName>
    </recommendedName>
    <alternativeName>
        <fullName>Haze protective factor 2</fullName>
    </alternativeName>
    <alternativeName>
        <fullName>Protoplast secreted protein 1</fullName>
    </alternativeName>
</protein>
<sequence length="444" mass="45807">MQLHSLIASTALLITSALAATSSSSSIPSSCTISSHATATAQSDLDKYSRCDTLVGNLTIGGGLKTGALANVKEINGSLTIFNATNLTSFAADSLESITDSLNLQSLTILTSASFGSLQSVDSIKLITLPAISSFTSNIKSANNIYISDTSLQSVDGFSALKKVNVFNVNNNKKLTSIKSPVETVSDSLQFSFNGNQTKITFDDLVWANNISLTDVHSVSFANLQKINSSLGFINNSISSLNFTKLNTIGQTFSIVSNDYLKNLSFSNLSTIGGALVVANNTGLQKIGGLDNLTTIGGTLEVVGNFTSLNLDSLKSVKGGADVESKSSNFSCNALKALQKKGGIKGESFVCKNGASSTSVKLSSTSKSQSSQTTAKVSKSSSKAEEKKFTSGDIKAAASASSVSSSSASSSSSKSSKGNAAIMAPIGQTTPLVGLLTAIIMSIM</sequence>
<organism>
    <name type="scientific">Saccharomyces cerevisiae (strain YJM789)</name>
    <name type="common">Baker's yeast</name>
    <dbReference type="NCBI Taxonomy" id="307796"/>
    <lineage>
        <taxon>Eukaryota</taxon>
        <taxon>Fungi</taxon>
        <taxon>Dikarya</taxon>
        <taxon>Ascomycota</taxon>
        <taxon>Saccharomycotina</taxon>
        <taxon>Saccharomycetes</taxon>
        <taxon>Saccharomycetales</taxon>
        <taxon>Saccharomycetaceae</taxon>
        <taxon>Saccharomyces</taxon>
    </lineage>
</organism>
<keyword id="KW-1003">Cell membrane</keyword>
<keyword id="KW-0134">Cell wall</keyword>
<keyword id="KW-0325">Glycoprotein</keyword>
<keyword id="KW-0336">GPI-anchor</keyword>
<keyword id="KW-0449">Lipoprotein</keyword>
<keyword id="KW-0472">Membrane</keyword>
<keyword id="KW-0964">Secreted</keyword>
<keyword id="KW-0732">Signal</keyword>
<proteinExistence type="inferred from homology"/>
<name>PST1_YEAS7</name>
<accession>A6ZY20</accession>
<reference key="1">
    <citation type="journal article" date="2007" name="Proc. Natl. Acad. Sci. U.S.A.">
        <title>Genome sequencing and comparative analysis of Saccharomyces cerevisiae strain YJM789.</title>
        <authorList>
            <person name="Wei W."/>
            <person name="McCusker J.H."/>
            <person name="Hyman R.W."/>
            <person name="Jones T."/>
            <person name="Ning Y."/>
            <person name="Cao Z."/>
            <person name="Gu Z."/>
            <person name="Bruno D."/>
            <person name="Miranda M."/>
            <person name="Nguyen M."/>
            <person name="Wilhelmy J."/>
            <person name="Komp C."/>
            <person name="Tamse R."/>
            <person name="Wang X."/>
            <person name="Jia P."/>
            <person name="Luedi P."/>
            <person name="Oefner P.J."/>
            <person name="David L."/>
            <person name="Dietrich F.S."/>
            <person name="Li Y."/>
            <person name="Davis R.W."/>
            <person name="Steinmetz L.M."/>
        </authorList>
    </citation>
    <scope>NUCLEOTIDE SEQUENCE [LARGE SCALE GENOMIC DNA]</scope>
    <source>
        <strain>YJM789</strain>
    </source>
</reference>
<feature type="signal peptide" evidence="2">
    <location>
        <begin position="1"/>
        <end position="19"/>
    </location>
</feature>
<feature type="chain" id="PRO_0000330255" description="Cell wall mannoprotein PST1">
    <location>
        <begin position="20"/>
        <end position="419"/>
    </location>
</feature>
<feature type="propeptide" id="PRO_0000330256" description="Removed in mature form" evidence="2">
    <location>
        <begin position="420"/>
        <end position="444"/>
    </location>
</feature>
<feature type="region of interest" description="Disordered" evidence="3">
    <location>
        <begin position="359"/>
        <end position="418"/>
    </location>
</feature>
<feature type="compositionally biased region" description="Low complexity" evidence="3">
    <location>
        <begin position="359"/>
        <end position="381"/>
    </location>
</feature>
<feature type="compositionally biased region" description="Low complexity" evidence="3">
    <location>
        <begin position="395"/>
        <end position="417"/>
    </location>
</feature>
<feature type="lipid moiety-binding region" description="GPI-anchor amidated asparagine" evidence="2">
    <location>
        <position position="419"/>
    </location>
</feature>
<feature type="glycosylation site" description="N-linked (GlcNAc...) asparagine" evidence="2">
    <location>
        <position position="57"/>
    </location>
</feature>
<feature type="glycosylation site" description="N-linked (GlcNAc...) asparagine" evidence="2">
    <location>
        <position position="76"/>
    </location>
</feature>
<feature type="glycosylation site" description="N-linked (GlcNAc...) asparagine" evidence="2">
    <location>
        <position position="83"/>
    </location>
</feature>
<feature type="glycosylation site" description="N-linked (GlcNAc...) asparagine" evidence="2">
    <location>
        <position position="86"/>
    </location>
</feature>
<feature type="glycosylation site" description="N-linked (GlcNAc...) asparagine" evidence="2">
    <location>
        <position position="196"/>
    </location>
</feature>
<feature type="glycosylation site" description="N-linked (GlcNAc...) asparagine" evidence="2">
    <location>
        <position position="210"/>
    </location>
</feature>
<feature type="glycosylation site" description="N-linked (GlcNAc...) asparagine" evidence="2">
    <location>
        <position position="228"/>
    </location>
</feature>
<feature type="glycosylation site" description="N-linked (GlcNAc...) asparagine" evidence="2">
    <location>
        <position position="235"/>
    </location>
</feature>
<feature type="glycosylation site" description="N-linked (GlcNAc...) asparagine" evidence="2">
    <location>
        <position position="242"/>
    </location>
</feature>
<feature type="glycosylation site" description="N-linked (GlcNAc...) asparagine" evidence="2">
    <location>
        <position position="263"/>
    </location>
</feature>
<feature type="glycosylation site" description="N-linked (GlcNAc...) asparagine" evidence="2">
    <location>
        <position position="268"/>
    </location>
</feature>
<feature type="glycosylation site" description="N-linked (GlcNAc...) asparagine" evidence="2">
    <location>
        <position position="280"/>
    </location>
</feature>
<feature type="glycosylation site" description="N-linked (GlcNAc...) asparagine" evidence="2">
    <location>
        <position position="292"/>
    </location>
</feature>
<feature type="glycosylation site" description="N-linked (GlcNAc...) asparagine" evidence="2">
    <location>
        <position position="305"/>
    </location>
</feature>
<feature type="glycosylation site" description="N-linked (GlcNAc...) asparagine" evidence="2">
    <location>
        <position position="329"/>
    </location>
</feature>
<gene>
    <name type="primary">PST1</name>
    <name type="synonym">HPF2</name>
    <name type="ORF">SCY_0958</name>
</gene>